<name>EX7S_THEMA</name>
<dbReference type="EC" id="3.1.11.6" evidence="1"/>
<dbReference type="EMBL" id="AE000512">
    <property type="protein sequence ID" value="AAD36843.1"/>
    <property type="status" value="ALT_INIT"/>
    <property type="molecule type" value="Genomic_DNA"/>
</dbReference>
<dbReference type="PIR" id="H72212">
    <property type="entry name" value="H72212"/>
</dbReference>
<dbReference type="RefSeq" id="NP_229566.1">
    <property type="nucleotide sequence ID" value="NC_000853.1"/>
</dbReference>
<dbReference type="SMR" id="Q9X290"/>
<dbReference type="FunCoup" id="Q9X290">
    <property type="interactions" value="197"/>
</dbReference>
<dbReference type="STRING" id="243274.TM_1769"/>
<dbReference type="PaxDb" id="243274-THEMA_05380"/>
<dbReference type="EnsemblBacteria" id="AAD36843">
    <property type="protein sequence ID" value="AAD36843"/>
    <property type="gene ID" value="TM_1769"/>
</dbReference>
<dbReference type="KEGG" id="tma:TM1769"/>
<dbReference type="KEGG" id="tmi:THEMA_05380"/>
<dbReference type="KEGG" id="tmm:Tmari_1778"/>
<dbReference type="PATRIC" id="fig|243274.5.peg.1788"/>
<dbReference type="eggNOG" id="COG1722">
    <property type="taxonomic scope" value="Bacteria"/>
</dbReference>
<dbReference type="InParanoid" id="Q9X290"/>
<dbReference type="OrthoDB" id="9808145at2"/>
<dbReference type="Proteomes" id="UP000008183">
    <property type="component" value="Chromosome"/>
</dbReference>
<dbReference type="GO" id="GO:0005829">
    <property type="term" value="C:cytosol"/>
    <property type="evidence" value="ECO:0000318"/>
    <property type="project" value="GO_Central"/>
</dbReference>
<dbReference type="GO" id="GO:0009318">
    <property type="term" value="C:exodeoxyribonuclease VII complex"/>
    <property type="evidence" value="ECO:0007669"/>
    <property type="project" value="InterPro"/>
</dbReference>
<dbReference type="GO" id="GO:0008855">
    <property type="term" value="F:exodeoxyribonuclease VII activity"/>
    <property type="evidence" value="ECO:0000318"/>
    <property type="project" value="GO_Central"/>
</dbReference>
<dbReference type="GO" id="GO:0006308">
    <property type="term" value="P:DNA catabolic process"/>
    <property type="evidence" value="ECO:0007669"/>
    <property type="project" value="UniProtKB-UniRule"/>
</dbReference>
<dbReference type="Gene3D" id="1.10.287.1040">
    <property type="entry name" value="Exonuclease VII, small subunit"/>
    <property type="match status" value="1"/>
</dbReference>
<dbReference type="HAMAP" id="MF_00337">
    <property type="entry name" value="Exonuc_7_S"/>
    <property type="match status" value="1"/>
</dbReference>
<dbReference type="InterPro" id="IPR003761">
    <property type="entry name" value="Exonuc_VII_S"/>
</dbReference>
<dbReference type="InterPro" id="IPR037004">
    <property type="entry name" value="Exonuc_VII_ssu_sf"/>
</dbReference>
<dbReference type="NCBIfam" id="NF002140">
    <property type="entry name" value="PRK00977.1-4"/>
    <property type="match status" value="1"/>
</dbReference>
<dbReference type="NCBIfam" id="NF010673">
    <property type="entry name" value="PRK14070.1"/>
    <property type="match status" value="1"/>
</dbReference>
<dbReference type="NCBIfam" id="TIGR01280">
    <property type="entry name" value="xseB"/>
    <property type="match status" value="1"/>
</dbReference>
<dbReference type="PANTHER" id="PTHR34137">
    <property type="entry name" value="EXODEOXYRIBONUCLEASE 7 SMALL SUBUNIT"/>
    <property type="match status" value="1"/>
</dbReference>
<dbReference type="PANTHER" id="PTHR34137:SF1">
    <property type="entry name" value="EXODEOXYRIBONUCLEASE 7 SMALL SUBUNIT"/>
    <property type="match status" value="1"/>
</dbReference>
<dbReference type="Pfam" id="PF02609">
    <property type="entry name" value="Exonuc_VII_S"/>
    <property type="match status" value="1"/>
</dbReference>
<dbReference type="PIRSF" id="PIRSF006488">
    <property type="entry name" value="Exonuc_VII_S"/>
    <property type="match status" value="1"/>
</dbReference>
<dbReference type="SUPFAM" id="SSF116842">
    <property type="entry name" value="XseB-like"/>
    <property type="match status" value="1"/>
</dbReference>
<comment type="function">
    <text evidence="1">Bidirectionally degrades single-stranded DNA into large acid-insoluble oligonucleotides, which are then degraded further into small acid-soluble oligonucleotides.</text>
</comment>
<comment type="catalytic activity">
    <reaction evidence="1">
        <text>Exonucleolytic cleavage in either 5'- to 3'- or 3'- to 5'-direction to yield nucleoside 5'-phosphates.</text>
        <dbReference type="EC" id="3.1.11.6"/>
    </reaction>
</comment>
<comment type="subunit">
    <text evidence="1">Heterooligomer composed of large and small subunits.</text>
</comment>
<comment type="subcellular location">
    <subcellularLocation>
        <location evidence="1">Cytoplasm</location>
    </subcellularLocation>
</comment>
<comment type="similarity">
    <text evidence="1 2">Belongs to the XseB family.</text>
</comment>
<comment type="sequence caution" evidence="2">
    <conflict type="erroneous initiation">
        <sequence resource="EMBL-CDS" id="AAD36843"/>
    </conflict>
    <text>Truncated N-terminus.</text>
</comment>
<evidence type="ECO:0000255" key="1">
    <source>
        <dbReference type="HAMAP-Rule" id="MF_00337"/>
    </source>
</evidence>
<evidence type="ECO:0000305" key="2"/>
<feature type="chain" id="PRO_0000207026" description="Exodeoxyribonuclease 7 small subunit">
    <location>
        <begin position="1"/>
        <end position="75"/>
    </location>
</feature>
<sequence length="75" mass="9041">MNFEEMMKELEEIVNRLENEDLPLEESIKLFERGVELYRKCKEILQQNRLKIIDVMKELEGEIDASGRDQENELR</sequence>
<gene>
    <name evidence="1" type="primary">xseB</name>
    <name type="ordered locus">TM_1769</name>
</gene>
<accession>Q9X290</accession>
<proteinExistence type="inferred from homology"/>
<reference key="1">
    <citation type="journal article" date="1999" name="Nature">
        <title>Evidence for lateral gene transfer between Archaea and Bacteria from genome sequence of Thermotoga maritima.</title>
        <authorList>
            <person name="Nelson K.E."/>
            <person name="Clayton R.A."/>
            <person name="Gill S.R."/>
            <person name="Gwinn M.L."/>
            <person name="Dodson R.J."/>
            <person name="Haft D.H."/>
            <person name="Hickey E.K."/>
            <person name="Peterson J.D."/>
            <person name="Nelson W.C."/>
            <person name="Ketchum K.A."/>
            <person name="McDonald L.A."/>
            <person name="Utterback T.R."/>
            <person name="Malek J.A."/>
            <person name="Linher K.D."/>
            <person name="Garrett M.M."/>
            <person name="Stewart A.M."/>
            <person name="Cotton M.D."/>
            <person name="Pratt M.S."/>
            <person name="Phillips C.A."/>
            <person name="Richardson D.L."/>
            <person name="Heidelberg J.F."/>
            <person name="Sutton G.G."/>
            <person name="Fleischmann R.D."/>
            <person name="Eisen J.A."/>
            <person name="White O."/>
            <person name="Salzberg S.L."/>
            <person name="Smith H.O."/>
            <person name="Venter J.C."/>
            <person name="Fraser C.M."/>
        </authorList>
    </citation>
    <scope>NUCLEOTIDE SEQUENCE [LARGE SCALE GENOMIC DNA]</scope>
    <source>
        <strain>ATCC 43589 / DSM 3109 / JCM 10099 / NBRC 100826 / MSB8</strain>
    </source>
</reference>
<protein>
    <recommendedName>
        <fullName evidence="1">Exodeoxyribonuclease 7 small subunit</fullName>
        <ecNumber evidence="1">3.1.11.6</ecNumber>
    </recommendedName>
    <alternativeName>
        <fullName evidence="1">Exodeoxyribonuclease VII small subunit</fullName>
        <shortName evidence="1">Exonuclease VII small subunit</shortName>
    </alternativeName>
</protein>
<organism>
    <name type="scientific">Thermotoga maritima (strain ATCC 43589 / DSM 3109 / JCM 10099 / NBRC 100826 / MSB8)</name>
    <dbReference type="NCBI Taxonomy" id="243274"/>
    <lineage>
        <taxon>Bacteria</taxon>
        <taxon>Thermotogati</taxon>
        <taxon>Thermotogota</taxon>
        <taxon>Thermotogae</taxon>
        <taxon>Thermotogales</taxon>
        <taxon>Thermotogaceae</taxon>
        <taxon>Thermotoga</taxon>
    </lineage>
</organism>
<keyword id="KW-0963">Cytoplasm</keyword>
<keyword id="KW-0269">Exonuclease</keyword>
<keyword id="KW-0378">Hydrolase</keyword>
<keyword id="KW-0540">Nuclease</keyword>
<keyword id="KW-1185">Reference proteome</keyword>